<feature type="chain" id="PRO_1000070091" description="Membrane protein insertase YidC">
    <location>
        <begin position="1"/>
        <end position="550"/>
    </location>
</feature>
<feature type="transmembrane region" description="Helical" evidence="1">
    <location>
        <begin position="6"/>
        <end position="26"/>
    </location>
</feature>
<feature type="transmembrane region" description="Helical" evidence="1">
    <location>
        <begin position="346"/>
        <end position="366"/>
    </location>
</feature>
<feature type="transmembrane region" description="Helical" evidence="1">
    <location>
        <begin position="421"/>
        <end position="441"/>
    </location>
</feature>
<feature type="transmembrane region" description="Helical" evidence="1">
    <location>
        <begin position="459"/>
        <end position="479"/>
    </location>
</feature>
<feature type="transmembrane region" description="Helical" evidence="1">
    <location>
        <begin position="500"/>
        <end position="520"/>
    </location>
</feature>
<feature type="region of interest" description="Disordered" evidence="2">
    <location>
        <begin position="28"/>
        <end position="54"/>
    </location>
</feature>
<feature type="region of interest" description="Disordered" evidence="2">
    <location>
        <begin position="111"/>
        <end position="132"/>
    </location>
</feature>
<feature type="compositionally biased region" description="Low complexity" evidence="2">
    <location>
        <begin position="30"/>
        <end position="52"/>
    </location>
</feature>
<feature type="compositionally biased region" description="Polar residues" evidence="2">
    <location>
        <begin position="111"/>
        <end position="127"/>
    </location>
</feature>
<keyword id="KW-0997">Cell inner membrane</keyword>
<keyword id="KW-1003">Cell membrane</keyword>
<keyword id="KW-0143">Chaperone</keyword>
<keyword id="KW-0472">Membrane</keyword>
<keyword id="KW-0653">Protein transport</keyword>
<keyword id="KW-1185">Reference proteome</keyword>
<keyword id="KW-0812">Transmembrane</keyword>
<keyword id="KW-1133">Transmembrane helix</keyword>
<keyword id="KW-0813">Transport</keyword>
<name>YIDC_CROS8</name>
<accession>A7MN02</accession>
<gene>
    <name evidence="1" type="primary">yidC</name>
    <name type="ordered locus">ESA_03978</name>
</gene>
<sequence length="550" mass="61736">MDSQRNLLVIALLFVSFMIWQTWEQDKAPKPQVQQTTQTTTTAAGSAASQGVPASGQGKLITVKTDVLSLTINTRGGDIEQALLLAYPKELGSSEPFQLLETTPNFVYQAQSGLTGRNGPDNPNNNKGRPLYNTERDTYVLADGQDELVIPMTFTDEAGNAFTKTFALKRGQYAVYVGYDVKNAGTQPLEISSFGQLKQTIDLPSHRDTGSSNFALHTFRGAAYSTPDEKYEKYKFDTIADDENLNVNAKGGWVAMLQQYFATAWVPASNVTSNFYTADLGHGVAAIGYKSEPVQVQPGQTAKLASTLWVGPEIQDKMAQVAPHLDLTVDYGWLWFISQPLFKLLKWIHSFLGNWGFSIIAITFIVRGVMYPLTKAQYTSMAKMRLLQPKIQAMRERLGDDKQRMSQEMMALYKAEKVNPLGGCFPLLIQMPIFLALYYMLMGSVELRHAPFALWIHDLSAQDPYYILPILMGATMFFIQKMSPTTVTDPMQQKIMTFMPVIFTVFFLWFPSGLVLYYIVSNLVTILQQQLIYRGLEKRGLHSREKKKKA</sequence>
<comment type="function">
    <text evidence="1">Required for the insertion and/or proper folding and/or complex formation of integral membrane proteins into the membrane. Involved in integration of membrane proteins that insert both dependently and independently of the Sec translocase complex, as well as at least some lipoproteins. Aids folding of multispanning membrane proteins.</text>
</comment>
<comment type="subunit">
    <text evidence="1">Interacts with the Sec translocase complex via SecD. Specifically interacts with transmembrane segments of nascent integral membrane proteins during membrane integration.</text>
</comment>
<comment type="subcellular location">
    <subcellularLocation>
        <location evidence="1">Cell inner membrane</location>
        <topology evidence="1">Multi-pass membrane protein</topology>
    </subcellularLocation>
</comment>
<comment type="similarity">
    <text evidence="1">Belongs to the OXA1/ALB3/YidC family. Type 1 subfamily.</text>
</comment>
<organism>
    <name type="scientific">Cronobacter sakazakii (strain ATCC BAA-894)</name>
    <name type="common">Enterobacter sakazakii</name>
    <dbReference type="NCBI Taxonomy" id="290339"/>
    <lineage>
        <taxon>Bacteria</taxon>
        <taxon>Pseudomonadati</taxon>
        <taxon>Pseudomonadota</taxon>
        <taxon>Gammaproteobacteria</taxon>
        <taxon>Enterobacterales</taxon>
        <taxon>Enterobacteriaceae</taxon>
        <taxon>Cronobacter</taxon>
    </lineage>
</organism>
<evidence type="ECO:0000255" key="1">
    <source>
        <dbReference type="HAMAP-Rule" id="MF_01810"/>
    </source>
</evidence>
<evidence type="ECO:0000256" key="2">
    <source>
        <dbReference type="SAM" id="MobiDB-lite"/>
    </source>
</evidence>
<proteinExistence type="inferred from homology"/>
<dbReference type="EMBL" id="CP000783">
    <property type="protein sequence ID" value="ABU79164.1"/>
    <property type="molecule type" value="Genomic_DNA"/>
</dbReference>
<dbReference type="RefSeq" id="WP_012126180.1">
    <property type="nucleotide sequence ID" value="NC_009778.1"/>
</dbReference>
<dbReference type="SMR" id="A7MN02"/>
<dbReference type="GeneID" id="56732621"/>
<dbReference type="KEGG" id="esa:ESA_03978"/>
<dbReference type="HOGENOM" id="CLU_016535_3_0_6"/>
<dbReference type="Proteomes" id="UP000000260">
    <property type="component" value="Chromosome"/>
</dbReference>
<dbReference type="GO" id="GO:0005886">
    <property type="term" value="C:plasma membrane"/>
    <property type="evidence" value="ECO:0007669"/>
    <property type="project" value="UniProtKB-SubCell"/>
</dbReference>
<dbReference type="GO" id="GO:0032977">
    <property type="term" value="F:membrane insertase activity"/>
    <property type="evidence" value="ECO:0007669"/>
    <property type="project" value="InterPro"/>
</dbReference>
<dbReference type="GO" id="GO:0051205">
    <property type="term" value="P:protein insertion into membrane"/>
    <property type="evidence" value="ECO:0007669"/>
    <property type="project" value="TreeGrafter"/>
</dbReference>
<dbReference type="GO" id="GO:0015031">
    <property type="term" value="P:protein transport"/>
    <property type="evidence" value="ECO:0007669"/>
    <property type="project" value="UniProtKB-KW"/>
</dbReference>
<dbReference type="CDD" id="cd20070">
    <property type="entry name" value="5TM_YidC_Alb3"/>
    <property type="match status" value="1"/>
</dbReference>
<dbReference type="CDD" id="cd19961">
    <property type="entry name" value="EcYidC-like_peri"/>
    <property type="match status" value="1"/>
</dbReference>
<dbReference type="FunFam" id="2.70.98.90:FF:000001">
    <property type="entry name" value="Membrane protein insertase YidC"/>
    <property type="match status" value="1"/>
</dbReference>
<dbReference type="Gene3D" id="2.70.98.90">
    <property type="match status" value="1"/>
</dbReference>
<dbReference type="HAMAP" id="MF_01810">
    <property type="entry name" value="YidC_type1"/>
    <property type="match status" value="1"/>
</dbReference>
<dbReference type="InterPro" id="IPR019998">
    <property type="entry name" value="Membr_insert_YidC"/>
</dbReference>
<dbReference type="InterPro" id="IPR028053">
    <property type="entry name" value="Membr_insert_YidC_N"/>
</dbReference>
<dbReference type="InterPro" id="IPR001708">
    <property type="entry name" value="YidC/ALB3/OXA1/COX18"/>
</dbReference>
<dbReference type="InterPro" id="IPR028055">
    <property type="entry name" value="YidC/Oxa/ALB_C"/>
</dbReference>
<dbReference type="InterPro" id="IPR047196">
    <property type="entry name" value="YidC_ALB_C"/>
</dbReference>
<dbReference type="InterPro" id="IPR038221">
    <property type="entry name" value="YidC_periplasmic_sf"/>
</dbReference>
<dbReference type="NCBIfam" id="NF002351">
    <property type="entry name" value="PRK01318.1-1"/>
    <property type="match status" value="1"/>
</dbReference>
<dbReference type="NCBIfam" id="NF002352">
    <property type="entry name" value="PRK01318.1-3"/>
    <property type="match status" value="1"/>
</dbReference>
<dbReference type="NCBIfam" id="NF002353">
    <property type="entry name" value="PRK01318.1-4"/>
    <property type="match status" value="1"/>
</dbReference>
<dbReference type="NCBIfam" id="TIGR03593">
    <property type="entry name" value="yidC_nterm"/>
    <property type="match status" value="1"/>
</dbReference>
<dbReference type="NCBIfam" id="TIGR03592">
    <property type="entry name" value="yidC_oxa1_cterm"/>
    <property type="match status" value="1"/>
</dbReference>
<dbReference type="PANTHER" id="PTHR12428:SF65">
    <property type="entry name" value="CYTOCHROME C OXIDASE ASSEMBLY PROTEIN COX18, MITOCHONDRIAL"/>
    <property type="match status" value="1"/>
</dbReference>
<dbReference type="PANTHER" id="PTHR12428">
    <property type="entry name" value="OXA1"/>
    <property type="match status" value="1"/>
</dbReference>
<dbReference type="Pfam" id="PF02096">
    <property type="entry name" value="60KD_IMP"/>
    <property type="match status" value="1"/>
</dbReference>
<dbReference type="Pfam" id="PF14849">
    <property type="entry name" value="YidC_periplas"/>
    <property type="match status" value="1"/>
</dbReference>
<dbReference type="PRINTS" id="PR00701">
    <property type="entry name" value="60KDINNERMP"/>
</dbReference>
<dbReference type="PRINTS" id="PR01900">
    <property type="entry name" value="YIDCPROTEIN"/>
</dbReference>
<reference key="1">
    <citation type="journal article" date="2010" name="PLoS ONE">
        <title>Genome sequence of Cronobacter sakazakii BAA-894 and comparative genomic hybridization analysis with other Cronobacter species.</title>
        <authorList>
            <person name="Kucerova E."/>
            <person name="Clifton S.W."/>
            <person name="Xia X.Q."/>
            <person name="Long F."/>
            <person name="Porwollik S."/>
            <person name="Fulton L."/>
            <person name="Fronick C."/>
            <person name="Minx P."/>
            <person name="Kyung K."/>
            <person name="Warren W."/>
            <person name="Fulton R."/>
            <person name="Feng D."/>
            <person name="Wollam A."/>
            <person name="Shah N."/>
            <person name="Bhonagiri V."/>
            <person name="Nash W.E."/>
            <person name="Hallsworth-Pepin K."/>
            <person name="Wilson R.K."/>
            <person name="McClelland M."/>
            <person name="Forsythe S.J."/>
        </authorList>
    </citation>
    <scope>NUCLEOTIDE SEQUENCE [LARGE SCALE GENOMIC DNA]</scope>
    <source>
        <strain>ATCC BAA-894</strain>
    </source>
</reference>
<protein>
    <recommendedName>
        <fullName evidence="1">Membrane protein insertase YidC</fullName>
    </recommendedName>
    <alternativeName>
        <fullName evidence="1">Foldase YidC</fullName>
    </alternativeName>
    <alternativeName>
        <fullName evidence="1">Membrane integrase YidC</fullName>
    </alternativeName>
    <alternativeName>
        <fullName evidence="1">Membrane protein YidC</fullName>
    </alternativeName>
</protein>